<protein>
    <recommendedName>
        <fullName>Uncharacterized ABC transporter ATP-binding protein Rv0073</fullName>
    </recommendedName>
</protein>
<proteinExistence type="evidence at protein level"/>
<evidence type="ECO:0000250" key="1"/>
<evidence type="ECO:0000255" key="2">
    <source>
        <dbReference type="PROSITE-ProRule" id="PRU00434"/>
    </source>
</evidence>
<evidence type="ECO:0000269" key="3">
    <source>
    </source>
</evidence>
<evidence type="ECO:0000305" key="4"/>
<comment type="function">
    <text evidence="1">Probably part of an ABC transporter complex. Probably responsible for energy coupling to the transport system (By similarity).</text>
</comment>
<comment type="subunit">
    <text evidence="4">The complex is composed of two ATP-binding proteins (Rv0073), two transmembrane proteins (Rv0072) and a solute-binding protein.</text>
</comment>
<comment type="similarity">
    <text evidence="4">Belongs to the ABC transporter superfamily.</text>
</comment>
<accession>P9WQK5</accession>
<accession>L0T5L5</accession>
<accession>O53618</accession>
<accession>Q7DAI2</accession>
<sequence length="330" mass="35801">MGDLSIQNLVVEYYSGGYALRPINGLNLDVAAGSLVMLLGPSGCGKTTLLSCLGGILRPKSGAIKFDEVDITTLQGAELANYRRNKVGIVFQAFNLVPSLTAVENVMVPLRSAGMSRRASRRRAEELLARVNLAERMNHRPGDLSGGQQQRVAVARAIALDPPLILADEPTAHLDFIQVEEVLRLIRELADGERVVVVATHDSRMLPMADRVVELTPDFAETNRPPETVHLQAGEVLFEQSTMGDLIYVVSEGEFEIVHELADGGEELVKVAGPGDYFGEIGVLFHLPRSATVRARSDATAVGYTVQAFRERLGVGGLRDLIEHRALAND</sequence>
<organism>
    <name type="scientific">Mycobacterium tuberculosis (strain ATCC 25618 / H37Rv)</name>
    <dbReference type="NCBI Taxonomy" id="83332"/>
    <lineage>
        <taxon>Bacteria</taxon>
        <taxon>Bacillati</taxon>
        <taxon>Actinomycetota</taxon>
        <taxon>Actinomycetes</taxon>
        <taxon>Mycobacteriales</taxon>
        <taxon>Mycobacteriaceae</taxon>
        <taxon>Mycobacterium</taxon>
        <taxon>Mycobacterium tuberculosis complex</taxon>
    </lineage>
</organism>
<gene>
    <name type="ordered locus">Rv0073</name>
</gene>
<dbReference type="EMBL" id="AL123456">
    <property type="protein sequence ID" value="CCP42796.1"/>
    <property type="molecule type" value="Genomic_DNA"/>
</dbReference>
<dbReference type="PIR" id="B70849">
    <property type="entry name" value="B70849"/>
</dbReference>
<dbReference type="RefSeq" id="NP_214587.1">
    <property type="nucleotide sequence ID" value="NC_000962.3"/>
</dbReference>
<dbReference type="RefSeq" id="WP_003899801.1">
    <property type="nucleotide sequence ID" value="NZ_NVQJ01000005.1"/>
</dbReference>
<dbReference type="SMR" id="P9WQK5"/>
<dbReference type="FunCoup" id="P9WQK5">
    <property type="interactions" value="22"/>
</dbReference>
<dbReference type="STRING" id="83332.Rv0073"/>
<dbReference type="PaxDb" id="83332-Rv0073"/>
<dbReference type="DNASU" id="886977"/>
<dbReference type="GeneID" id="886977"/>
<dbReference type="KEGG" id="mtu:Rv0073"/>
<dbReference type="KEGG" id="mtv:RVBD_0073"/>
<dbReference type="TubercuList" id="Rv0073"/>
<dbReference type="eggNOG" id="COG0664">
    <property type="taxonomic scope" value="Bacteria"/>
</dbReference>
<dbReference type="eggNOG" id="COG1136">
    <property type="taxonomic scope" value="Bacteria"/>
</dbReference>
<dbReference type="InParanoid" id="P9WQK5"/>
<dbReference type="OrthoDB" id="9802264at2"/>
<dbReference type="PhylomeDB" id="P9WQK5"/>
<dbReference type="Proteomes" id="UP000001584">
    <property type="component" value="Chromosome"/>
</dbReference>
<dbReference type="GO" id="GO:0005886">
    <property type="term" value="C:plasma membrane"/>
    <property type="evidence" value="ECO:0000318"/>
    <property type="project" value="GO_Central"/>
</dbReference>
<dbReference type="GO" id="GO:0005524">
    <property type="term" value="F:ATP binding"/>
    <property type="evidence" value="ECO:0007669"/>
    <property type="project" value="UniProtKB-KW"/>
</dbReference>
<dbReference type="GO" id="GO:0016887">
    <property type="term" value="F:ATP hydrolysis activity"/>
    <property type="evidence" value="ECO:0007669"/>
    <property type="project" value="InterPro"/>
</dbReference>
<dbReference type="GO" id="GO:0022857">
    <property type="term" value="F:transmembrane transporter activity"/>
    <property type="evidence" value="ECO:0000318"/>
    <property type="project" value="GO_Central"/>
</dbReference>
<dbReference type="GO" id="GO:0055085">
    <property type="term" value="P:transmembrane transport"/>
    <property type="evidence" value="ECO:0000318"/>
    <property type="project" value="GO_Central"/>
</dbReference>
<dbReference type="CDD" id="cd03255">
    <property type="entry name" value="ABC_MJ0796_LolCDE_FtsE"/>
    <property type="match status" value="1"/>
</dbReference>
<dbReference type="CDD" id="cd00038">
    <property type="entry name" value="CAP_ED"/>
    <property type="match status" value="1"/>
</dbReference>
<dbReference type="FunFam" id="3.40.50.300:FF:001448">
    <property type="entry name" value="Glutamine ABC transporter ATP-binding protein"/>
    <property type="match status" value="1"/>
</dbReference>
<dbReference type="FunFam" id="2.60.120.10:FF:000127">
    <property type="entry name" value="Glutamine-transport ATP-binding protein ABC transporter GLNQ"/>
    <property type="match status" value="1"/>
</dbReference>
<dbReference type="Gene3D" id="2.60.120.10">
    <property type="entry name" value="Jelly Rolls"/>
    <property type="match status" value="1"/>
</dbReference>
<dbReference type="Gene3D" id="3.40.50.300">
    <property type="entry name" value="P-loop containing nucleotide triphosphate hydrolases"/>
    <property type="match status" value="1"/>
</dbReference>
<dbReference type="InterPro" id="IPR003593">
    <property type="entry name" value="AAA+_ATPase"/>
</dbReference>
<dbReference type="InterPro" id="IPR003439">
    <property type="entry name" value="ABC_transporter-like_ATP-bd"/>
</dbReference>
<dbReference type="InterPro" id="IPR017871">
    <property type="entry name" value="ABC_transporter-like_CS"/>
</dbReference>
<dbReference type="InterPro" id="IPR015854">
    <property type="entry name" value="ABC_transpr_LolD-like"/>
</dbReference>
<dbReference type="InterPro" id="IPR018488">
    <property type="entry name" value="cNMP-bd_CS"/>
</dbReference>
<dbReference type="InterPro" id="IPR000595">
    <property type="entry name" value="cNMP-bd_dom"/>
</dbReference>
<dbReference type="InterPro" id="IPR018490">
    <property type="entry name" value="cNMP-bd_dom_sf"/>
</dbReference>
<dbReference type="InterPro" id="IPR017911">
    <property type="entry name" value="MacB-like_ATP-bd"/>
</dbReference>
<dbReference type="InterPro" id="IPR027417">
    <property type="entry name" value="P-loop_NTPase"/>
</dbReference>
<dbReference type="InterPro" id="IPR014710">
    <property type="entry name" value="RmlC-like_jellyroll"/>
</dbReference>
<dbReference type="PANTHER" id="PTHR24220">
    <property type="entry name" value="IMPORT ATP-BINDING PROTEIN"/>
    <property type="match status" value="1"/>
</dbReference>
<dbReference type="PANTHER" id="PTHR24220:SF689">
    <property type="entry name" value="LIPOPROTEIN-RELEASING SYSTEM ATP-BINDING PROTEIN LOLD"/>
    <property type="match status" value="1"/>
</dbReference>
<dbReference type="Pfam" id="PF00005">
    <property type="entry name" value="ABC_tran"/>
    <property type="match status" value="1"/>
</dbReference>
<dbReference type="Pfam" id="PF00027">
    <property type="entry name" value="cNMP_binding"/>
    <property type="match status" value="1"/>
</dbReference>
<dbReference type="PRINTS" id="PR00103">
    <property type="entry name" value="CAMPKINASE"/>
</dbReference>
<dbReference type="SMART" id="SM00382">
    <property type="entry name" value="AAA"/>
    <property type="match status" value="1"/>
</dbReference>
<dbReference type="SMART" id="SM00100">
    <property type="entry name" value="cNMP"/>
    <property type="match status" value="1"/>
</dbReference>
<dbReference type="SUPFAM" id="SSF51206">
    <property type="entry name" value="cAMP-binding domain-like"/>
    <property type="match status" value="1"/>
</dbReference>
<dbReference type="SUPFAM" id="SSF52540">
    <property type="entry name" value="P-loop containing nucleoside triphosphate hydrolases"/>
    <property type="match status" value="1"/>
</dbReference>
<dbReference type="PROSITE" id="PS00211">
    <property type="entry name" value="ABC_TRANSPORTER_1"/>
    <property type="match status" value="1"/>
</dbReference>
<dbReference type="PROSITE" id="PS50893">
    <property type="entry name" value="ABC_TRANSPORTER_2"/>
    <property type="match status" value="1"/>
</dbReference>
<dbReference type="PROSITE" id="PS00889">
    <property type="entry name" value="CNMP_BINDING_2"/>
    <property type="match status" value="1"/>
</dbReference>
<dbReference type="PROSITE" id="PS50042">
    <property type="entry name" value="CNMP_BINDING_3"/>
    <property type="match status" value="1"/>
</dbReference>
<name>Y073_MYCTU</name>
<keyword id="KW-0067">ATP-binding</keyword>
<keyword id="KW-1017">Isopeptide bond</keyword>
<keyword id="KW-0547">Nucleotide-binding</keyword>
<keyword id="KW-1185">Reference proteome</keyword>
<keyword id="KW-0813">Transport</keyword>
<keyword id="KW-0832">Ubl conjugation</keyword>
<feature type="chain" id="PRO_0000395860" description="Uncharacterized ABC transporter ATP-binding protein Rv0073">
    <location>
        <begin position="1"/>
        <end position="330"/>
    </location>
</feature>
<feature type="domain" description="ABC transporter" evidence="2">
    <location>
        <begin position="4"/>
        <end position="242"/>
    </location>
</feature>
<feature type="binding site" evidence="2">
    <location>
        <begin position="40"/>
        <end position="47"/>
    </location>
    <ligand>
        <name>ATP</name>
        <dbReference type="ChEBI" id="CHEBI:30616"/>
    </ligand>
</feature>
<feature type="binding site">
    <location>
        <begin position="210"/>
        <end position="330"/>
    </location>
    <ligand>
        <name>a nucleoside 3',5'-cyclic phosphate</name>
        <dbReference type="ChEBI" id="CHEBI:58464"/>
    </ligand>
</feature>
<feature type="cross-link" description="Isoglutamyl lysine isopeptide (Lys-Gln) (interchain with Q-Cter in protein Pup)" evidence="3">
    <location>
        <position position="65"/>
    </location>
</feature>
<reference key="1">
    <citation type="journal article" date="1998" name="Nature">
        <title>Deciphering the biology of Mycobacterium tuberculosis from the complete genome sequence.</title>
        <authorList>
            <person name="Cole S.T."/>
            <person name="Brosch R."/>
            <person name="Parkhill J."/>
            <person name="Garnier T."/>
            <person name="Churcher C.M."/>
            <person name="Harris D.E."/>
            <person name="Gordon S.V."/>
            <person name="Eiglmeier K."/>
            <person name="Gas S."/>
            <person name="Barry C.E. III"/>
            <person name="Tekaia F."/>
            <person name="Badcock K."/>
            <person name="Basham D."/>
            <person name="Brown D."/>
            <person name="Chillingworth T."/>
            <person name="Connor R."/>
            <person name="Davies R.M."/>
            <person name="Devlin K."/>
            <person name="Feltwell T."/>
            <person name="Gentles S."/>
            <person name="Hamlin N."/>
            <person name="Holroyd S."/>
            <person name="Hornsby T."/>
            <person name="Jagels K."/>
            <person name="Krogh A."/>
            <person name="McLean J."/>
            <person name="Moule S."/>
            <person name="Murphy L.D."/>
            <person name="Oliver S."/>
            <person name="Osborne J."/>
            <person name="Quail M.A."/>
            <person name="Rajandream M.A."/>
            <person name="Rogers J."/>
            <person name="Rutter S."/>
            <person name="Seeger K."/>
            <person name="Skelton S."/>
            <person name="Squares S."/>
            <person name="Squares R."/>
            <person name="Sulston J.E."/>
            <person name="Taylor K."/>
            <person name="Whitehead S."/>
            <person name="Barrell B.G."/>
        </authorList>
    </citation>
    <scope>NUCLEOTIDE SEQUENCE [LARGE SCALE GENOMIC DNA]</scope>
    <source>
        <strain>ATCC 25618 / H37Rv</strain>
    </source>
</reference>
<reference key="2">
    <citation type="journal article" date="2010" name="PLoS ONE">
        <title>Prokaryotic ubiquitin-like protein (Pup) proteome of Mycobacterium tuberculosis.</title>
        <authorList>
            <person name="Festa R.A."/>
            <person name="McAllister F."/>
            <person name="Pearce M.J."/>
            <person name="Mintseris J."/>
            <person name="Burns K.E."/>
            <person name="Gygi S.P."/>
            <person name="Darwin K.H."/>
        </authorList>
    </citation>
    <scope>PUPYLATION AT LYS-65</scope>
    <scope>IDENTIFICATION BY MASS SPECTROMETRY</scope>
    <source>
        <strain>ATCC 25618 / H37Rv</strain>
    </source>
</reference>
<reference key="3">
    <citation type="journal article" date="2011" name="Mol. Cell. Proteomics">
        <title>Proteogenomic analysis of Mycobacterium tuberculosis by high resolution mass spectrometry.</title>
        <authorList>
            <person name="Kelkar D.S."/>
            <person name="Kumar D."/>
            <person name="Kumar P."/>
            <person name="Balakrishnan L."/>
            <person name="Muthusamy B."/>
            <person name="Yadav A.K."/>
            <person name="Shrivastava P."/>
            <person name="Marimuthu A."/>
            <person name="Anand S."/>
            <person name="Sundaram H."/>
            <person name="Kingsbury R."/>
            <person name="Harsha H.C."/>
            <person name="Nair B."/>
            <person name="Prasad T.S."/>
            <person name="Chauhan D.S."/>
            <person name="Katoch K."/>
            <person name="Katoch V.M."/>
            <person name="Kumar P."/>
            <person name="Chaerkady R."/>
            <person name="Ramachandran S."/>
            <person name="Dash D."/>
            <person name="Pandey A."/>
        </authorList>
    </citation>
    <scope>IDENTIFICATION BY MASS SPECTROMETRY [LARGE SCALE ANALYSIS]</scope>
    <source>
        <strain>ATCC 25618 / H37Rv</strain>
    </source>
</reference>